<protein>
    <recommendedName>
        <fullName evidence="1">UPF0145 protein BceJ2315_57450</fullName>
    </recommendedName>
</protein>
<organism>
    <name type="scientific">Burkholderia cenocepacia (strain ATCC BAA-245 / DSM 16553 / LMG 16656 / NCTC 13227 / J2315 / CF5610)</name>
    <name type="common">Burkholderia cepacia (strain J2315)</name>
    <dbReference type="NCBI Taxonomy" id="216591"/>
    <lineage>
        <taxon>Bacteria</taxon>
        <taxon>Pseudomonadati</taxon>
        <taxon>Pseudomonadota</taxon>
        <taxon>Betaproteobacteria</taxon>
        <taxon>Burkholderiales</taxon>
        <taxon>Burkholderiaceae</taxon>
        <taxon>Burkholderia</taxon>
        <taxon>Burkholderia cepacia complex</taxon>
    </lineage>
</organism>
<proteinExistence type="inferred from homology"/>
<evidence type="ECO:0000255" key="1">
    <source>
        <dbReference type="HAMAP-Rule" id="MF_00338"/>
    </source>
</evidence>
<gene>
    <name type="ordered locus">BceJ2315_57450</name>
    <name type="ORF">BCAM2309</name>
</gene>
<feature type="chain" id="PRO_1000119983" description="UPF0145 protein BceJ2315_57450">
    <location>
        <begin position="1"/>
        <end position="122"/>
    </location>
</feature>
<name>Y5745_BURCJ</name>
<reference key="1">
    <citation type="journal article" date="2009" name="J. Bacteriol.">
        <title>The genome of Burkholderia cenocepacia J2315, an epidemic pathogen of cystic fibrosis patients.</title>
        <authorList>
            <person name="Holden M.T."/>
            <person name="Seth-Smith H.M."/>
            <person name="Crossman L.C."/>
            <person name="Sebaihia M."/>
            <person name="Bentley S.D."/>
            <person name="Cerdeno-Tarraga A.M."/>
            <person name="Thomson N.R."/>
            <person name="Bason N."/>
            <person name="Quail M.A."/>
            <person name="Sharp S."/>
            <person name="Cherevach I."/>
            <person name="Churcher C."/>
            <person name="Goodhead I."/>
            <person name="Hauser H."/>
            <person name="Holroyd N."/>
            <person name="Mungall K."/>
            <person name="Scott P."/>
            <person name="Walker D."/>
            <person name="White B."/>
            <person name="Rose H."/>
            <person name="Iversen P."/>
            <person name="Mil-Homens D."/>
            <person name="Rocha E.P."/>
            <person name="Fialho A.M."/>
            <person name="Baldwin A."/>
            <person name="Dowson C."/>
            <person name="Barrell B.G."/>
            <person name="Govan J.R."/>
            <person name="Vandamme P."/>
            <person name="Hart C.A."/>
            <person name="Mahenthiralingam E."/>
            <person name="Parkhill J."/>
        </authorList>
    </citation>
    <scope>NUCLEOTIDE SEQUENCE [LARGE SCALE GENOMIC DNA]</scope>
    <source>
        <strain>ATCC BAA-245 / DSM 16553 / LMG 16656 / NCTC 13227 / J2315 / CF5610</strain>
    </source>
</reference>
<comment type="similarity">
    <text evidence="1">Belongs to the UPF0145 family.</text>
</comment>
<sequence length="122" mass="12743">MTESNRSLDDLSPARVTTAFDLPGHTTVRSLGVAQGIVVRSRSIVGSFGASLQTIFGGNITLYTSLCEKAREQAFDKMLAEACKLGANAIVAMRYDSTEIGSGVTEVICYGTAVQVAHAAGA</sequence>
<accession>B4EHF8</accession>
<dbReference type="EMBL" id="AM747721">
    <property type="protein sequence ID" value="CAR56168.1"/>
    <property type="molecule type" value="Genomic_DNA"/>
</dbReference>
<dbReference type="RefSeq" id="WP_006483793.1">
    <property type="nucleotide sequence ID" value="NC_011001.1"/>
</dbReference>
<dbReference type="SMR" id="B4EHF8"/>
<dbReference type="KEGG" id="bcj:BCAM2309"/>
<dbReference type="eggNOG" id="COG0393">
    <property type="taxonomic scope" value="Bacteria"/>
</dbReference>
<dbReference type="HOGENOM" id="CLU_117144_1_1_4"/>
<dbReference type="BioCyc" id="BCEN216591:G1G1V-6386-MONOMER"/>
<dbReference type="Proteomes" id="UP000001035">
    <property type="component" value="Chromosome 2"/>
</dbReference>
<dbReference type="Gene3D" id="3.30.110.70">
    <property type="entry name" value="Hypothetical protein apc22750. Chain B"/>
    <property type="match status" value="1"/>
</dbReference>
<dbReference type="HAMAP" id="MF_00338">
    <property type="entry name" value="UPF0145"/>
    <property type="match status" value="1"/>
</dbReference>
<dbReference type="InterPro" id="IPR035439">
    <property type="entry name" value="UPF0145_dom_sf"/>
</dbReference>
<dbReference type="InterPro" id="IPR002765">
    <property type="entry name" value="UPF0145_YbjQ-like"/>
</dbReference>
<dbReference type="PANTHER" id="PTHR34068:SF2">
    <property type="entry name" value="UPF0145 PROTEIN SCO3412"/>
    <property type="match status" value="1"/>
</dbReference>
<dbReference type="PANTHER" id="PTHR34068">
    <property type="entry name" value="UPF0145 PROTEIN YBJQ"/>
    <property type="match status" value="1"/>
</dbReference>
<dbReference type="Pfam" id="PF01906">
    <property type="entry name" value="YbjQ_1"/>
    <property type="match status" value="1"/>
</dbReference>
<dbReference type="SUPFAM" id="SSF117782">
    <property type="entry name" value="YbjQ-like"/>
    <property type="match status" value="1"/>
</dbReference>